<evidence type="ECO:0000255" key="1">
    <source>
        <dbReference type="HAMAP-Rule" id="MF_00150"/>
    </source>
</evidence>
<organism>
    <name type="scientific">Phocaeicola vulgatus (strain ATCC 8482 / DSM 1447 / JCM 5826 / CCUG 4940 / NBRC 14291 / NCTC 11154)</name>
    <name type="common">Bacteroides vulgatus</name>
    <dbReference type="NCBI Taxonomy" id="435590"/>
    <lineage>
        <taxon>Bacteria</taxon>
        <taxon>Pseudomonadati</taxon>
        <taxon>Bacteroidota</taxon>
        <taxon>Bacteroidia</taxon>
        <taxon>Bacteroidales</taxon>
        <taxon>Bacteroidaceae</taxon>
        <taxon>Phocaeicola</taxon>
    </lineage>
</organism>
<comment type="function">
    <text evidence="1">Catalyzes the NADPH-dependent reduction of N-acetyl-5-glutamyl phosphate to yield N-acetyl-L-glutamate 5-semialdehyde.</text>
</comment>
<comment type="catalytic activity">
    <reaction evidence="1">
        <text>N-acetyl-L-glutamate 5-semialdehyde + phosphate + NADP(+) = N-acetyl-L-glutamyl 5-phosphate + NADPH + H(+)</text>
        <dbReference type="Rhea" id="RHEA:21588"/>
        <dbReference type="ChEBI" id="CHEBI:15378"/>
        <dbReference type="ChEBI" id="CHEBI:29123"/>
        <dbReference type="ChEBI" id="CHEBI:43474"/>
        <dbReference type="ChEBI" id="CHEBI:57783"/>
        <dbReference type="ChEBI" id="CHEBI:57936"/>
        <dbReference type="ChEBI" id="CHEBI:58349"/>
        <dbReference type="EC" id="1.2.1.38"/>
    </reaction>
</comment>
<comment type="pathway">
    <text evidence="1">Amino-acid biosynthesis; L-arginine biosynthesis; N(2)-acetyl-L-ornithine from L-glutamate: step 3/4.</text>
</comment>
<comment type="subcellular location">
    <subcellularLocation>
        <location evidence="1">Cytoplasm</location>
    </subcellularLocation>
</comment>
<comment type="similarity">
    <text evidence="1">Belongs to the NAGSA dehydrogenase family. Type 1 subfamily.</text>
</comment>
<sequence>MIKAGIIGGAGYTAGELIRLLINHPDVDIKFINSSSNAGNKITDVHEGLYGETDLVFTDELPLDEIDVLFFCTAHGDTKKFMDSHNVPEDLKIIDLSMDYRIKSDDHDFIYGLPELNRRAICHSKHVANPGCFATCIQLGLLPLAKHLLLNEDIMVNAITGSTGAGVKPGATSHFSWRNNNMSIYKPFSHQHVPEIKQSLKQLQNSFNAEIDFIPYRGDFPRGIFATLVVKCKVELEELVKMYQDYYAEDSFVHIVDKNIDLKQVVNTNKCLIHLEKHGDKLLVISCIDNLLKGASGQAVHNMNLMFNLEETVGLRLKPSAF</sequence>
<gene>
    <name evidence="1" type="primary">argC</name>
    <name type="ordered locus">BVU_0591</name>
</gene>
<name>ARGC_PHOV8</name>
<feature type="chain" id="PRO_1000010979" description="N-acetyl-gamma-glutamyl-phosphate reductase">
    <location>
        <begin position="1"/>
        <end position="322"/>
    </location>
</feature>
<feature type="active site" evidence="1">
    <location>
        <position position="132"/>
    </location>
</feature>
<reference key="1">
    <citation type="journal article" date="2007" name="PLoS Biol.">
        <title>Evolution of symbiotic bacteria in the distal human intestine.</title>
        <authorList>
            <person name="Xu J."/>
            <person name="Mahowald M.A."/>
            <person name="Ley R.E."/>
            <person name="Lozupone C.A."/>
            <person name="Hamady M."/>
            <person name="Martens E.C."/>
            <person name="Henrissat B."/>
            <person name="Coutinho P.M."/>
            <person name="Minx P."/>
            <person name="Latreille P."/>
            <person name="Cordum H."/>
            <person name="Van Brunt A."/>
            <person name="Kim K."/>
            <person name="Fulton R.S."/>
            <person name="Fulton L.A."/>
            <person name="Clifton S.W."/>
            <person name="Wilson R.K."/>
            <person name="Knight R.D."/>
            <person name="Gordon J.I."/>
        </authorList>
    </citation>
    <scope>NUCLEOTIDE SEQUENCE [LARGE SCALE GENOMIC DNA]</scope>
    <source>
        <strain>ATCC 8482 / DSM 1447 / JCM 5826 / CCUG 4940 / NBRC 14291 / NCTC 11154</strain>
    </source>
</reference>
<keyword id="KW-0028">Amino-acid biosynthesis</keyword>
<keyword id="KW-0055">Arginine biosynthesis</keyword>
<keyword id="KW-0963">Cytoplasm</keyword>
<keyword id="KW-0521">NADP</keyword>
<keyword id="KW-0560">Oxidoreductase</keyword>
<protein>
    <recommendedName>
        <fullName evidence="1">N-acetyl-gamma-glutamyl-phosphate reductase</fullName>
        <shortName evidence="1">AGPR</shortName>
        <ecNumber evidence="1">1.2.1.38</ecNumber>
    </recommendedName>
    <alternativeName>
        <fullName evidence="1">N-acetyl-glutamate semialdehyde dehydrogenase</fullName>
        <shortName evidence="1">NAGSA dehydrogenase</shortName>
    </alternativeName>
</protein>
<dbReference type="EC" id="1.2.1.38" evidence="1"/>
<dbReference type="EMBL" id="CP000139">
    <property type="protein sequence ID" value="ABR38299.1"/>
    <property type="molecule type" value="Genomic_DNA"/>
</dbReference>
<dbReference type="RefSeq" id="WP_011964820.1">
    <property type="nucleotide sequence ID" value="NZ_CAXTLN010000038.1"/>
</dbReference>
<dbReference type="SMR" id="A6KXY5"/>
<dbReference type="STRING" id="435590.BVU_0591"/>
<dbReference type="PaxDb" id="435590-BVU_0591"/>
<dbReference type="GeneID" id="5301559"/>
<dbReference type="KEGG" id="bvu:BVU_0591"/>
<dbReference type="PATRIC" id="fig|435590.9.peg.609"/>
<dbReference type="eggNOG" id="COG0002">
    <property type="taxonomic scope" value="Bacteria"/>
</dbReference>
<dbReference type="HOGENOM" id="CLU_006384_0_1_10"/>
<dbReference type="BioCyc" id="BVUL435590:G1G59-618-MONOMER"/>
<dbReference type="UniPathway" id="UPA00068">
    <property type="reaction ID" value="UER00108"/>
</dbReference>
<dbReference type="Proteomes" id="UP000002861">
    <property type="component" value="Chromosome"/>
</dbReference>
<dbReference type="GO" id="GO:0005737">
    <property type="term" value="C:cytoplasm"/>
    <property type="evidence" value="ECO:0007669"/>
    <property type="project" value="UniProtKB-SubCell"/>
</dbReference>
<dbReference type="GO" id="GO:0003942">
    <property type="term" value="F:N-acetyl-gamma-glutamyl-phosphate reductase activity"/>
    <property type="evidence" value="ECO:0007669"/>
    <property type="project" value="UniProtKB-UniRule"/>
</dbReference>
<dbReference type="GO" id="GO:0051287">
    <property type="term" value="F:NAD binding"/>
    <property type="evidence" value="ECO:0007669"/>
    <property type="project" value="InterPro"/>
</dbReference>
<dbReference type="GO" id="GO:0070401">
    <property type="term" value="F:NADP+ binding"/>
    <property type="evidence" value="ECO:0007669"/>
    <property type="project" value="InterPro"/>
</dbReference>
<dbReference type="GO" id="GO:0006526">
    <property type="term" value="P:L-arginine biosynthetic process"/>
    <property type="evidence" value="ECO:0007669"/>
    <property type="project" value="UniProtKB-UniRule"/>
</dbReference>
<dbReference type="CDD" id="cd23934">
    <property type="entry name" value="AGPR_1_C"/>
    <property type="match status" value="1"/>
</dbReference>
<dbReference type="CDD" id="cd17895">
    <property type="entry name" value="AGPR_1_N"/>
    <property type="match status" value="1"/>
</dbReference>
<dbReference type="Gene3D" id="3.30.360.10">
    <property type="entry name" value="Dihydrodipicolinate Reductase, domain 2"/>
    <property type="match status" value="1"/>
</dbReference>
<dbReference type="Gene3D" id="3.40.50.720">
    <property type="entry name" value="NAD(P)-binding Rossmann-like Domain"/>
    <property type="match status" value="1"/>
</dbReference>
<dbReference type="HAMAP" id="MF_00150">
    <property type="entry name" value="ArgC_type1"/>
    <property type="match status" value="1"/>
</dbReference>
<dbReference type="InterPro" id="IPR023013">
    <property type="entry name" value="AGPR_AS"/>
</dbReference>
<dbReference type="InterPro" id="IPR000706">
    <property type="entry name" value="AGPR_type-1"/>
</dbReference>
<dbReference type="InterPro" id="IPR036291">
    <property type="entry name" value="NAD(P)-bd_dom_sf"/>
</dbReference>
<dbReference type="InterPro" id="IPR050085">
    <property type="entry name" value="NAGSA_dehydrogenase"/>
</dbReference>
<dbReference type="InterPro" id="IPR000534">
    <property type="entry name" value="Semialdehyde_DH_NAD-bd"/>
</dbReference>
<dbReference type="NCBIfam" id="TIGR01850">
    <property type="entry name" value="argC"/>
    <property type="match status" value="1"/>
</dbReference>
<dbReference type="PANTHER" id="PTHR32338:SF10">
    <property type="entry name" value="N-ACETYL-GAMMA-GLUTAMYL-PHOSPHATE REDUCTASE, CHLOROPLASTIC-RELATED"/>
    <property type="match status" value="1"/>
</dbReference>
<dbReference type="PANTHER" id="PTHR32338">
    <property type="entry name" value="N-ACETYL-GAMMA-GLUTAMYL-PHOSPHATE REDUCTASE, CHLOROPLASTIC-RELATED-RELATED"/>
    <property type="match status" value="1"/>
</dbReference>
<dbReference type="Pfam" id="PF01118">
    <property type="entry name" value="Semialdhyde_dh"/>
    <property type="match status" value="1"/>
</dbReference>
<dbReference type="Pfam" id="PF22698">
    <property type="entry name" value="Semialdhyde_dhC_1"/>
    <property type="match status" value="1"/>
</dbReference>
<dbReference type="SMART" id="SM00859">
    <property type="entry name" value="Semialdhyde_dh"/>
    <property type="match status" value="1"/>
</dbReference>
<dbReference type="SUPFAM" id="SSF55347">
    <property type="entry name" value="Glyceraldehyde-3-phosphate dehydrogenase-like, C-terminal domain"/>
    <property type="match status" value="1"/>
</dbReference>
<dbReference type="SUPFAM" id="SSF51735">
    <property type="entry name" value="NAD(P)-binding Rossmann-fold domains"/>
    <property type="match status" value="1"/>
</dbReference>
<dbReference type="PROSITE" id="PS01224">
    <property type="entry name" value="ARGC"/>
    <property type="match status" value="1"/>
</dbReference>
<proteinExistence type="inferred from homology"/>
<accession>A6KXY5</accession>